<keyword id="KW-0238">DNA-binding</keyword>
<keyword id="KW-1185">Reference proteome</keyword>
<keyword id="KW-0804">Transcription</keyword>
<keyword id="KW-0805">Transcription regulation</keyword>
<feature type="chain" id="PRO_0000176912" description="Transcription elongation factor GreA">
    <location>
        <begin position="1"/>
        <end position="159"/>
    </location>
</feature>
<accession>P57464</accession>
<comment type="function">
    <text evidence="1">Necessary for efficient RNA polymerase transcription elongation past template-encoded arresting sites. The arresting sites in DNA have the property of trapping a certain fraction of elongating RNA polymerases that pass through, resulting in locked ternary complexes. Cleavage of the nascent transcript by cleavage factors such as GreA or GreB allows the resumption of elongation from the new 3'terminus. GreA releases sequences of 2 to 3 nucleotides.</text>
</comment>
<comment type="similarity">
    <text evidence="1">Belongs to the GreA/GreB family.</text>
</comment>
<dbReference type="EMBL" id="BA000003">
    <property type="protein sequence ID" value="BAB13087.1"/>
    <property type="molecule type" value="Genomic_DNA"/>
</dbReference>
<dbReference type="RefSeq" id="NP_240201.1">
    <property type="nucleotide sequence ID" value="NC_002528.1"/>
</dbReference>
<dbReference type="SMR" id="P57464"/>
<dbReference type="STRING" id="563178.BUAP5A_377"/>
<dbReference type="EnsemblBacteria" id="BAB13087">
    <property type="protein sequence ID" value="BAB13087"/>
    <property type="gene ID" value="BAB13087"/>
</dbReference>
<dbReference type="KEGG" id="buc:BU384"/>
<dbReference type="PATRIC" id="fig|107806.10.peg.398"/>
<dbReference type="eggNOG" id="COG0782">
    <property type="taxonomic scope" value="Bacteria"/>
</dbReference>
<dbReference type="HOGENOM" id="CLU_101379_2_0_6"/>
<dbReference type="Proteomes" id="UP000001806">
    <property type="component" value="Chromosome"/>
</dbReference>
<dbReference type="GO" id="GO:0003677">
    <property type="term" value="F:DNA binding"/>
    <property type="evidence" value="ECO:0007669"/>
    <property type="project" value="UniProtKB-UniRule"/>
</dbReference>
<dbReference type="GO" id="GO:0070063">
    <property type="term" value="F:RNA polymerase binding"/>
    <property type="evidence" value="ECO:0007669"/>
    <property type="project" value="InterPro"/>
</dbReference>
<dbReference type="GO" id="GO:0006354">
    <property type="term" value="P:DNA-templated transcription elongation"/>
    <property type="evidence" value="ECO:0007669"/>
    <property type="project" value="TreeGrafter"/>
</dbReference>
<dbReference type="GO" id="GO:0032784">
    <property type="term" value="P:regulation of DNA-templated transcription elongation"/>
    <property type="evidence" value="ECO:0007669"/>
    <property type="project" value="UniProtKB-UniRule"/>
</dbReference>
<dbReference type="FunFam" id="1.10.287.180:FF:000001">
    <property type="entry name" value="Transcription elongation factor GreA"/>
    <property type="match status" value="1"/>
</dbReference>
<dbReference type="FunFam" id="3.10.50.30:FF:000001">
    <property type="entry name" value="Transcription elongation factor GreA"/>
    <property type="match status" value="1"/>
</dbReference>
<dbReference type="Gene3D" id="3.10.50.30">
    <property type="entry name" value="Transcription elongation factor, GreA/GreB, C-terminal domain"/>
    <property type="match status" value="1"/>
</dbReference>
<dbReference type="Gene3D" id="1.10.287.180">
    <property type="entry name" value="Transcription elongation factor, GreA/GreB, N-terminal domain"/>
    <property type="match status" value="1"/>
</dbReference>
<dbReference type="HAMAP" id="MF_00105">
    <property type="entry name" value="GreA_GreB"/>
    <property type="match status" value="1"/>
</dbReference>
<dbReference type="InterPro" id="IPR036953">
    <property type="entry name" value="GreA/GreB_C_sf"/>
</dbReference>
<dbReference type="InterPro" id="IPR018151">
    <property type="entry name" value="TF_GreA/GreB_CS"/>
</dbReference>
<dbReference type="InterPro" id="IPR006359">
    <property type="entry name" value="Tscrpt_elong_fac_GreA"/>
</dbReference>
<dbReference type="InterPro" id="IPR028624">
    <property type="entry name" value="Tscrpt_elong_fac_GreA/B"/>
</dbReference>
<dbReference type="InterPro" id="IPR001437">
    <property type="entry name" value="Tscrpt_elong_fac_GreA/B_C"/>
</dbReference>
<dbReference type="InterPro" id="IPR023459">
    <property type="entry name" value="Tscrpt_elong_fac_GreA/B_fam"/>
</dbReference>
<dbReference type="InterPro" id="IPR022691">
    <property type="entry name" value="Tscrpt_elong_fac_GreA/B_N"/>
</dbReference>
<dbReference type="InterPro" id="IPR036805">
    <property type="entry name" value="Tscrpt_elong_fac_GreA/B_N_sf"/>
</dbReference>
<dbReference type="NCBIfam" id="TIGR01462">
    <property type="entry name" value="greA"/>
    <property type="match status" value="1"/>
</dbReference>
<dbReference type="NCBIfam" id="NF001261">
    <property type="entry name" value="PRK00226.1-2"/>
    <property type="match status" value="1"/>
</dbReference>
<dbReference type="NCBIfam" id="NF001263">
    <property type="entry name" value="PRK00226.1-4"/>
    <property type="match status" value="1"/>
</dbReference>
<dbReference type="NCBIfam" id="NF001264">
    <property type="entry name" value="PRK00226.1-5"/>
    <property type="match status" value="1"/>
</dbReference>
<dbReference type="PANTHER" id="PTHR30437">
    <property type="entry name" value="TRANSCRIPTION ELONGATION FACTOR GREA"/>
    <property type="match status" value="1"/>
</dbReference>
<dbReference type="PANTHER" id="PTHR30437:SF4">
    <property type="entry name" value="TRANSCRIPTION ELONGATION FACTOR GREA"/>
    <property type="match status" value="1"/>
</dbReference>
<dbReference type="Pfam" id="PF01272">
    <property type="entry name" value="GreA_GreB"/>
    <property type="match status" value="1"/>
</dbReference>
<dbReference type="Pfam" id="PF03449">
    <property type="entry name" value="GreA_GreB_N"/>
    <property type="match status" value="1"/>
</dbReference>
<dbReference type="PIRSF" id="PIRSF006092">
    <property type="entry name" value="GreA_GreB"/>
    <property type="match status" value="1"/>
</dbReference>
<dbReference type="SUPFAM" id="SSF54534">
    <property type="entry name" value="FKBP-like"/>
    <property type="match status" value="1"/>
</dbReference>
<dbReference type="SUPFAM" id="SSF46557">
    <property type="entry name" value="GreA transcript cleavage protein, N-terminal domain"/>
    <property type="match status" value="1"/>
</dbReference>
<dbReference type="PROSITE" id="PS00829">
    <property type="entry name" value="GREAB_1"/>
    <property type="match status" value="1"/>
</dbReference>
<dbReference type="PROSITE" id="PS00830">
    <property type="entry name" value="GREAB_2"/>
    <property type="match status" value="1"/>
</dbReference>
<gene>
    <name evidence="1" type="primary">greA</name>
    <name type="ordered locus">BU384</name>
</gene>
<name>GREA_BUCAI</name>
<protein>
    <recommendedName>
        <fullName evidence="1">Transcription elongation factor GreA</fullName>
    </recommendedName>
    <alternativeName>
        <fullName evidence="1">Transcript cleavage factor GreA</fullName>
    </alternativeName>
</protein>
<evidence type="ECO:0000255" key="1">
    <source>
        <dbReference type="HAMAP-Rule" id="MF_00105"/>
    </source>
</evidence>
<sequence length="159" mass="17983">MINLIPMTVRGAEKLRRELKKLKSINRPRIIAAIAEAREHGDLKENAEYHSAREEQSFCEGRIKEIELKLSNSQIIDVTKISNNGRVIFGSTVSILNIKNNEKFTYRIVGDDESDFKKNLISINSPIARGLIGKEINDVVIICTPGGDVEYKILKINYI</sequence>
<reference key="1">
    <citation type="journal article" date="2000" name="Nature">
        <title>Genome sequence of the endocellular bacterial symbiont of aphids Buchnera sp. APS.</title>
        <authorList>
            <person name="Shigenobu S."/>
            <person name="Watanabe H."/>
            <person name="Hattori M."/>
            <person name="Sakaki Y."/>
            <person name="Ishikawa H."/>
        </authorList>
    </citation>
    <scope>NUCLEOTIDE SEQUENCE [LARGE SCALE GENOMIC DNA]</scope>
    <source>
        <strain>APS</strain>
    </source>
</reference>
<organism>
    <name type="scientific">Buchnera aphidicola subsp. Acyrthosiphon pisum (strain APS)</name>
    <name type="common">Acyrthosiphon pisum symbiotic bacterium</name>
    <dbReference type="NCBI Taxonomy" id="107806"/>
    <lineage>
        <taxon>Bacteria</taxon>
        <taxon>Pseudomonadati</taxon>
        <taxon>Pseudomonadota</taxon>
        <taxon>Gammaproteobacteria</taxon>
        <taxon>Enterobacterales</taxon>
        <taxon>Erwiniaceae</taxon>
        <taxon>Buchnera</taxon>
    </lineage>
</organism>
<proteinExistence type="inferred from homology"/>